<feature type="signal peptide" evidence="3">
    <location>
        <begin position="1"/>
        <end position="22"/>
    </location>
</feature>
<feature type="propeptide" id="PRO_0000034932" evidence="1">
    <location>
        <begin position="23"/>
        <end position="45"/>
    </location>
</feature>
<feature type="peptide" id="PRO_0000034933" description="Omega-conotoxin SO-3">
    <location>
        <begin position="46"/>
        <end position="70"/>
    </location>
</feature>
<feature type="site" description="Important for calcium channel binding" evidence="2">
    <location>
        <position position="58"/>
    </location>
</feature>
<feature type="modified residue" description="Cysteine amide" evidence="5">
    <location>
        <position position="70"/>
    </location>
</feature>
<feature type="disulfide bond" evidence="6 13">
    <location>
        <begin position="46"/>
        <end position="61"/>
    </location>
</feature>
<feature type="disulfide bond" evidence="6 13">
    <location>
        <begin position="53"/>
        <end position="65"/>
    </location>
</feature>
<feature type="disulfide bond" evidence="6 13">
    <location>
        <begin position="60"/>
        <end position="70"/>
    </location>
</feature>
<feature type="mutagenesis site" description="2.8-fold increase in inhibition of Cav2.2; increase in efficacy to kill goldfish (LD(50) is 11.6 mg/kg by intramuscular injection) (mutant omega-2)." evidence="5">
    <original>AAGKP</original>
    <variation>GKGAK</variation>
    <location>
        <begin position="48"/>
        <end position="52"/>
    </location>
</feature>
<feature type="mutagenesis site" description="4.3-fold decrease in inhibition of Cav2.2; increase in efficacy to kill goldfish (LD(50) is 5.20 mg/kg by intramuscular injection) (mutant omega-1)." evidence="5">
    <original>IAYN</original>
    <variation>LMYD</variation>
    <location>
        <begin position="56"/>
        <end position="59"/>
    </location>
</feature>
<feature type="sequence conflict" description="In Ref. 2; AAF89906." evidence="11" ref="2">
    <original>M</original>
    <variation>V</variation>
    <location>
        <position position="6"/>
    </location>
</feature>
<feature type="strand" evidence="14">
    <location>
        <begin position="61"/>
        <end position="63"/>
    </location>
</feature>
<accession>Q9XZK2</accession>
<accession>Q9NCV3</accession>
<proteinExistence type="evidence at protein level"/>
<sequence length="71" mass="7628">MKLTCMVIVAVLLLTACQLITADDSRGTQKHRTLRSKTKLSMSTRCKAAGKPCSRIAYNCCTGSCRSGKCG</sequence>
<protein>
    <recommendedName>
        <fullName evidence="7 8 9">Omega-conotoxin SO-3</fullName>
        <shortName evidence="10">SO3</shortName>
    </recommendedName>
</protein>
<name>O16O3_CONST</name>
<reference key="1">
    <citation type="journal article" date="1999" name="Peptides">
        <title>Conopeptides from Conus striatus and Conus textile by cDNA cloning.</title>
        <authorList>
            <person name="Lu B.-S."/>
            <person name="Yu F."/>
            <person name="Zhao D."/>
            <person name="Huang P.-T."/>
            <person name="Huang C.-F."/>
        </authorList>
    </citation>
    <scope>NUCLEOTIDE SEQUENCE [MRNA]</scope>
    <source>
        <tissue>Venom duct</tissue>
    </source>
</reference>
<reference key="2">
    <citation type="submission" date="2000-08" db="EMBL/GenBank/DDBJ databases">
        <title>Molecular evolution of four-loop conotoxin precursors from fish-eating Conus.</title>
        <authorList>
            <person name="Duda T.F."/>
            <person name="Palumbi S.R."/>
        </authorList>
    </citation>
    <scope>NUCLEOTIDE SEQUENCE [GENOMIC DNA] OF 6-71</scope>
</reference>
<reference key="3">
    <citation type="journal article" date="2003" name="J. Nat. Prod.">
        <title>The synthesis of SO-3, a conopeptide with high analgesic activity derived from Conus striatus.</title>
        <authorList>
            <person name="Dai Q."/>
            <person name="Liu F."/>
            <person name="Zhou Y."/>
            <person name="Lu B.-S."/>
            <person name="Yu F."/>
            <person name="Huang P.-T."/>
        </authorList>
    </citation>
    <scope>SYNTHESIS OF 45-70</scope>
    <scope>ANALGESIC ACTIVITY</scope>
</reference>
<reference key="4">
    <citation type="journal article" date="2005" name="Br. J. Pharmacol.">
        <title>SO-3, a new O-superfamily conopeptide derived from Conus striatus, selectively inhibits N-type calcium currents in cultured hippocampal neurons.</title>
        <authorList>
            <person name="Wen L."/>
            <person name="Yang S."/>
            <person name="Qiao H."/>
            <person name="Liu Z."/>
            <person name="Zhou W."/>
            <person name="Zhang Y."/>
            <person name="Huang P.-T."/>
        </authorList>
    </citation>
    <scope>FUNCTION</scope>
</reference>
<reference key="5">
    <citation type="journal article" date="2016" name="Neuropharmacology">
        <title>Molecular basis of toxicity of N-type calcium channel inhibitor MVIIA.</title>
        <authorList>
            <person name="Wang F."/>
            <person name="Yan Z."/>
            <person name="Liu Z."/>
            <person name="Wang S."/>
            <person name="Wu Q."/>
            <person name="Yu S."/>
            <person name="Ding J."/>
            <person name="Dai Q."/>
        </authorList>
    </citation>
    <scope>FUNCTION</scope>
    <scope>TOXIC DOSE</scope>
    <scope>SYNTHESIS OF 46-70</scope>
    <scope>AMIDATION AT CYS-70</scope>
    <scope>MUTAGENESIS OF 48-ALA--PRO-52 AND 56-ILE--ASN-59</scope>
    <scope>BIOASSAY</scope>
</reference>
<reference key="6">
    <citation type="journal article" date="2003" name="Chin. Sci. Bull.">
        <title>Three dimensional solution structure of omega-conotoxin SO3 determined by NMR.</title>
        <authorList>
            <person name="Yan Y.B."/>
            <person name="Tu G.Z."/>
            <person name="Luo X.C."/>
            <person name="Dai Q.Y."/>
            <person name="Huang P.-T."/>
            <person name="Zhang R.Q."/>
        </authorList>
    </citation>
    <scope>STRUCTURE BY NMR OF 46-70</scope>
    <scope>DISULFIDE BONDS</scope>
</reference>
<dbReference type="EMBL" id="AF146348">
    <property type="protein sequence ID" value="AAD31908.1"/>
    <property type="molecule type" value="mRNA"/>
</dbReference>
<dbReference type="EMBL" id="AF174242">
    <property type="protein sequence ID" value="AAF89906.1"/>
    <property type="molecule type" value="Genomic_DNA"/>
</dbReference>
<dbReference type="PDB" id="1FYG">
    <property type="method" value="NMR"/>
    <property type="chains" value="A=46-70"/>
</dbReference>
<dbReference type="PDBsum" id="1FYG"/>
<dbReference type="SMR" id="Q9XZK2"/>
<dbReference type="ConoServer" id="1216">
    <property type="toxin name" value="SO3 precursor"/>
</dbReference>
<dbReference type="ConoServer" id="864">
    <property type="toxin name" value="SO3 precursor"/>
</dbReference>
<dbReference type="EvolutionaryTrace" id="Q9XZK2"/>
<dbReference type="GO" id="GO:0005576">
    <property type="term" value="C:extracellular region"/>
    <property type="evidence" value="ECO:0007669"/>
    <property type="project" value="UniProtKB-SubCell"/>
</dbReference>
<dbReference type="GO" id="GO:0044231">
    <property type="term" value="C:host cell presynaptic membrane"/>
    <property type="evidence" value="ECO:0007669"/>
    <property type="project" value="UniProtKB-KW"/>
</dbReference>
<dbReference type="GO" id="GO:0005246">
    <property type="term" value="F:calcium channel regulator activity"/>
    <property type="evidence" value="ECO:0007669"/>
    <property type="project" value="UniProtKB-KW"/>
</dbReference>
<dbReference type="GO" id="GO:0008200">
    <property type="term" value="F:ion channel inhibitor activity"/>
    <property type="evidence" value="ECO:0007669"/>
    <property type="project" value="InterPro"/>
</dbReference>
<dbReference type="GO" id="GO:0090729">
    <property type="term" value="F:toxin activity"/>
    <property type="evidence" value="ECO:0007669"/>
    <property type="project" value="UniProtKB-KW"/>
</dbReference>
<dbReference type="InterPro" id="IPR004214">
    <property type="entry name" value="Conotoxin"/>
</dbReference>
<dbReference type="InterPro" id="IPR012321">
    <property type="entry name" value="Conotoxin_omega-typ_CS"/>
</dbReference>
<dbReference type="Pfam" id="PF02950">
    <property type="entry name" value="Conotoxin"/>
    <property type="match status" value="1"/>
</dbReference>
<dbReference type="SUPFAM" id="SSF57059">
    <property type="entry name" value="omega toxin-like"/>
    <property type="match status" value="1"/>
</dbReference>
<dbReference type="PROSITE" id="PS60004">
    <property type="entry name" value="OMEGA_CONOTOXIN"/>
    <property type="match status" value="1"/>
</dbReference>
<comment type="function">
    <text evidence="4 5">Omega-conotoxins act at presynaptic membranes, they bind and block voltage-gated calcium channels (Cav). This peptide selectively targets Cav2.2/CACNA1B (IC(50)=160 nM) voltage-gated calcium channels (PubMed:26344359). When tested in mammals, this toxin displays an analgesic potency similar to MVIIA in a range of acute and chronic pain models in rodents, but has less adverse effects (tremor, diminution of spontaneous locomotor activity and bad coordinated locomotion) compared with identical dosages of MVIIA injected intrathecally.</text>
</comment>
<comment type="subcellular location">
    <subcellularLocation>
        <location evidence="2">Secreted</location>
    </subcellularLocation>
</comment>
<comment type="tissue specificity">
    <text evidence="11">Expressed by the venom duct.</text>
</comment>
<comment type="domain">
    <text>The presence of a 'disulfide through disulfide knot' structurally defines this protein as a knottin.</text>
</comment>
<comment type="domain">
    <text>The cysteine framework is VI/VII (C-C-CC-C-C).</text>
</comment>
<comment type="toxic dose">
    <text evidence="5">LD(50) is &gt;16 mg/kg by intramuscular injection into goldfish (C.carassius).</text>
</comment>
<comment type="miscellaneous">
    <text evidence="12">Negative results: has no effect on R-type calcium currents, voltage-gated sodium currents, delayed rectifier potassium currents and transient outward potassium currents.</text>
</comment>
<comment type="similarity">
    <text evidence="11">Belongs to the conotoxin O1 superfamily.</text>
</comment>
<organism>
    <name type="scientific">Conus striatus</name>
    <name type="common">Striated cone</name>
    <dbReference type="NCBI Taxonomy" id="6493"/>
    <lineage>
        <taxon>Eukaryota</taxon>
        <taxon>Metazoa</taxon>
        <taxon>Spiralia</taxon>
        <taxon>Lophotrochozoa</taxon>
        <taxon>Mollusca</taxon>
        <taxon>Gastropoda</taxon>
        <taxon>Caenogastropoda</taxon>
        <taxon>Neogastropoda</taxon>
        <taxon>Conoidea</taxon>
        <taxon>Conidae</taxon>
        <taxon>Conus</taxon>
        <taxon>Pionoconus</taxon>
    </lineage>
</organism>
<keyword id="KW-0002">3D-structure</keyword>
<keyword id="KW-0027">Amidation</keyword>
<keyword id="KW-0108">Calcium channel impairing toxin</keyword>
<keyword id="KW-1015">Disulfide bond</keyword>
<keyword id="KW-0872">Ion channel impairing toxin</keyword>
<keyword id="KW-0960">Knottin</keyword>
<keyword id="KW-0528">Neurotoxin</keyword>
<keyword id="KW-0638">Presynaptic neurotoxin</keyword>
<keyword id="KW-0964">Secreted</keyword>
<keyword id="KW-0732">Signal</keyword>
<keyword id="KW-0800">Toxin</keyword>
<keyword id="KW-1218">Voltage-gated calcium channel impairing toxin</keyword>
<evidence type="ECO:0000250" key="1"/>
<evidence type="ECO:0000250" key="2">
    <source>
        <dbReference type="UniProtKB" id="P05484"/>
    </source>
</evidence>
<evidence type="ECO:0000255" key="3"/>
<evidence type="ECO:0000269" key="4">
    <source>
    </source>
</evidence>
<evidence type="ECO:0000269" key="5">
    <source>
    </source>
</evidence>
<evidence type="ECO:0000269" key="6">
    <source ref="6"/>
</evidence>
<evidence type="ECO:0000303" key="7">
    <source>
    </source>
</evidence>
<evidence type="ECO:0000303" key="8">
    <source>
    </source>
</evidence>
<evidence type="ECO:0000303" key="9">
    <source>
    </source>
</evidence>
<evidence type="ECO:0000303" key="10">
    <source ref="6"/>
</evidence>
<evidence type="ECO:0000305" key="11"/>
<evidence type="ECO:0000305" key="12">
    <source>
    </source>
</evidence>
<evidence type="ECO:0007744" key="13">
    <source>
        <dbReference type="PDB" id="1FYG"/>
    </source>
</evidence>
<evidence type="ECO:0007829" key="14">
    <source>
        <dbReference type="PDB" id="1FYG"/>
    </source>
</evidence>